<gene>
    <name evidence="1" type="primary">tsf</name>
    <name type="ordered locus">lin1766</name>
</gene>
<sequence length="294" mass="32768">MANITAQMVKELREKTGAGMMDCKKALVETEGDMEKAIDYLREKGIAKAAKKSDRVASEGMTHVISNEKHAVVLEVNAETDFVAKNDNFQQLVDALAKQILEVRPDSLEDALKTEMPNGQTVQDYITEAITKIGENISLRRFEVKEKADNSAFGEYIHMNGRIGVLTLLEGTTDTTVAKDVAMHIAAINPKYISREDVSTEEVEHEKEVLTQQALNEGKPANIVEKMVEGRLKKYLSEISLEDQPFVKNPDITVGEYVKQSGGKVVSFVRFEVGEGIEKKEDNFVEEVMSQVKK</sequence>
<feature type="chain" id="PRO_0000161143" description="Elongation factor Ts">
    <location>
        <begin position="1"/>
        <end position="294"/>
    </location>
</feature>
<feature type="region of interest" description="Involved in Mg(2+) ion dislocation from EF-Tu" evidence="1">
    <location>
        <begin position="80"/>
        <end position="83"/>
    </location>
</feature>
<proteinExistence type="inferred from homology"/>
<dbReference type="EMBL" id="AL596169">
    <property type="protein sequence ID" value="CAC96997.1"/>
    <property type="molecule type" value="Genomic_DNA"/>
</dbReference>
<dbReference type="PIR" id="AE1653">
    <property type="entry name" value="AE1653"/>
</dbReference>
<dbReference type="RefSeq" id="WP_003762546.1">
    <property type="nucleotide sequence ID" value="NC_003212.1"/>
</dbReference>
<dbReference type="SMR" id="Q92B02"/>
<dbReference type="STRING" id="272626.gene:17566097"/>
<dbReference type="GeneID" id="93235079"/>
<dbReference type="KEGG" id="lin:tsf"/>
<dbReference type="eggNOG" id="COG0264">
    <property type="taxonomic scope" value="Bacteria"/>
</dbReference>
<dbReference type="HOGENOM" id="CLU_047155_0_2_9"/>
<dbReference type="OrthoDB" id="9808348at2"/>
<dbReference type="Proteomes" id="UP000002513">
    <property type="component" value="Chromosome"/>
</dbReference>
<dbReference type="GO" id="GO:0005737">
    <property type="term" value="C:cytoplasm"/>
    <property type="evidence" value="ECO:0007669"/>
    <property type="project" value="UniProtKB-SubCell"/>
</dbReference>
<dbReference type="GO" id="GO:0003746">
    <property type="term" value="F:translation elongation factor activity"/>
    <property type="evidence" value="ECO:0007669"/>
    <property type="project" value="UniProtKB-UniRule"/>
</dbReference>
<dbReference type="CDD" id="cd14275">
    <property type="entry name" value="UBA_EF-Ts"/>
    <property type="match status" value="1"/>
</dbReference>
<dbReference type="FunFam" id="1.10.286.20:FF:000003">
    <property type="entry name" value="Elongation factor Ts"/>
    <property type="match status" value="1"/>
</dbReference>
<dbReference type="FunFam" id="1.10.8.10:FF:000001">
    <property type="entry name" value="Elongation factor Ts"/>
    <property type="match status" value="1"/>
</dbReference>
<dbReference type="FunFam" id="3.30.479.20:FF:000005">
    <property type="entry name" value="Elongation factor Ts"/>
    <property type="match status" value="1"/>
</dbReference>
<dbReference type="Gene3D" id="1.10.286.20">
    <property type="match status" value="1"/>
</dbReference>
<dbReference type="Gene3D" id="1.10.8.10">
    <property type="entry name" value="DNA helicase RuvA subunit, C-terminal domain"/>
    <property type="match status" value="1"/>
</dbReference>
<dbReference type="Gene3D" id="3.30.479.20">
    <property type="entry name" value="Elongation factor Ts, dimerisation domain"/>
    <property type="match status" value="2"/>
</dbReference>
<dbReference type="HAMAP" id="MF_00050">
    <property type="entry name" value="EF_Ts"/>
    <property type="match status" value="1"/>
</dbReference>
<dbReference type="InterPro" id="IPR036402">
    <property type="entry name" value="EF-Ts_dimer_sf"/>
</dbReference>
<dbReference type="InterPro" id="IPR001816">
    <property type="entry name" value="Transl_elong_EFTs/EF1B"/>
</dbReference>
<dbReference type="InterPro" id="IPR014039">
    <property type="entry name" value="Transl_elong_EFTs/EF1B_dimer"/>
</dbReference>
<dbReference type="InterPro" id="IPR018101">
    <property type="entry name" value="Transl_elong_Ts_CS"/>
</dbReference>
<dbReference type="InterPro" id="IPR009060">
    <property type="entry name" value="UBA-like_sf"/>
</dbReference>
<dbReference type="NCBIfam" id="TIGR00116">
    <property type="entry name" value="tsf"/>
    <property type="match status" value="1"/>
</dbReference>
<dbReference type="PANTHER" id="PTHR11741">
    <property type="entry name" value="ELONGATION FACTOR TS"/>
    <property type="match status" value="1"/>
</dbReference>
<dbReference type="PANTHER" id="PTHR11741:SF0">
    <property type="entry name" value="ELONGATION FACTOR TS, MITOCHONDRIAL"/>
    <property type="match status" value="1"/>
</dbReference>
<dbReference type="Pfam" id="PF00889">
    <property type="entry name" value="EF_TS"/>
    <property type="match status" value="1"/>
</dbReference>
<dbReference type="SUPFAM" id="SSF54713">
    <property type="entry name" value="Elongation factor Ts (EF-Ts), dimerisation domain"/>
    <property type="match status" value="2"/>
</dbReference>
<dbReference type="SUPFAM" id="SSF46934">
    <property type="entry name" value="UBA-like"/>
    <property type="match status" value="1"/>
</dbReference>
<dbReference type="PROSITE" id="PS01126">
    <property type="entry name" value="EF_TS_1"/>
    <property type="match status" value="1"/>
</dbReference>
<dbReference type="PROSITE" id="PS01127">
    <property type="entry name" value="EF_TS_2"/>
    <property type="match status" value="1"/>
</dbReference>
<evidence type="ECO:0000255" key="1">
    <source>
        <dbReference type="HAMAP-Rule" id="MF_00050"/>
    </source>
</evidence>
<protein>
    <recommendedName>
        <fullName evidence="1">Elongation factor Ts</fullName>
        <shortName evidence="1">EF-Ts</shortName>
    </recommendedName>
</protein>
<name>EFTS_LISIN</name>
<organism>
    <name type="scientific">Listeria innocua serovar 6a (strain ATCC BAA-680 / CLIP 11262)</name>
    <dbReference type="NCBI Taxonomy" id="272626"/>
    <lineage>
        <taxon>Bacteria</taxon>
        <taxon>Bacillati</taxon>
        <taxon>Bacillota</taxon>
        <taxon>Bacilli</taxon>
        <taxon>Bacillales</taxon>
        <taxon>Listeriaceae</taxon>
        <taxon>Listeria</taxon>
    </lineage>
</organism>
<keyword id="KW-0963">Cytoplasm</keyword>
<keyword id="KW-0251">Elongation factor</keyword>
<keyword id="KW-0648">Protein biosynthesis</keyword>
<comment type="function">
    <text evidence="1">Associates with the EF-Tu.GDP complex and induces the exchange of GDP to GTP. It remains bound to the aminoacyl-tRNA.EF-Tu.GTP complex up to the GTP hydrolysis stage on the ribosome.</text>
</comment>
<comment type="subcellular location">
    <subcellularLocation>
        <location evidence="1">Cytoplasm</location>
    </subcellularLocation>
</comment>
<comment type="similarity">
    <text evidence="1">Belongs to the EF-Ts family.</text>
</comment>
<accession>Q92B02</accession>
<reference key="1">
    <citation type="journal article" date="2001" name="Science">
        <title>Comparative genomics of Listeria species.</title>
        <authorList>
            <person name="Glaser P."/>
            <person name="Frangeul L."/>
            <person name="Buchrieser C."/>
            <person name="Rusniok C."/>
            <person name="Amend A."/>
            <person name="Baquero F."/>
            <person name="Berche P."/>
            <person name="Bloecker H."/>
            <person name="Brandt P."/>
            <person name="Chakraborty T."/>
            <person name="Charbit A."/>
            <person name="Chetouani F."/>
            <person name="Couve E."/>
            <person name="de Daruvar A."/>
            <person name="Dehoux P."/>
            <person name="Domann E."/>
            <person name="Dominguez-Bernal G."/>
            <person name="Duchaud E."/>
            <person name="Durant L."/>
            <person name="Dussurget O."/>
            <person name="Entian K.-D."/>
            <person name="Fsihi H."/>
            <person name="Garcia-del Portillo F."/>
            <person name="Garrido P."/>
            <person name="Gautier L."/>
            <person name="Goebel W."/>
            <person name="Gomez-Lopez N."/>
            <person name="Hain T."/>
            <person name="Hauf J."/>
            <person name="Jackson D."/>
            <person name="Jones L.-M."/>
            <person name="Kaerst U."/>
            <person name="Kreft J."/>
            <person name="Kuhn M."/>
            <person name="Kunst F."/>
            <person name="Kurapkat G."/>
            <person name="Madueno E."/>
            <person name="Maitournam A."/>
            <person name="Mata Vicente J."/>
            <person name="Ng E."/>
            <person name="Nedjari H."/>
            <person name="Nordsiek G."/>
            <person name="Novella S."/>
            <person name="de Pablos B."/>
            <person name="Perez-Diaz J.-C."/>
            <person name="Purcell R."/>
            <person name="Remmel B."/>
            <person name="Rose M."/>
            <person name="Schlueter T."/>
            <person name="Simoes N."/>
            <person name="Tierrez A."/>
            <person name="Vazquez-Boland J.-A."/>
            <person name="Voss H."/>
            <person name="Wehland J."/>
            <person name="Cossart P."/>
        </authorList>
    </citation>
    <scope>NUCLEOTIDE SEQUENCE [LARGE SCALE GENOMIC DNA]</scope>
    <source>
        <strain>ATCC BAA-680 / CLIP 11262</strain>
    </source>
</reference>